<comment type="function">
    <text evidence="1">Specifically dimethylates two adjacent adenosines (A1518 and A1519) in the loop of a conserved hairpin near the 3'-end of 16S rRNA in the 30S particle. May play a critical role in biogenesis of 30S subunits.</text>
</comment>
<comment type="catalytic activity">
    <reaction evidence="1">
        <text>adenosine(1518)/adenosine(1519) in 16S rRNA + 4 S-adenosyl-L-methionine = N(6)-dimethyladenosine(1518)/N(6)-dimethyladenosine(1519) in 16S rRNA + 4 S-adenosyl-L-homocysteine + 4 H(+)</text>
        <dbReference type="Rhea" id="RHEA:19609"/>
        <dbReference type="Rhea" id="RHEA-COMP:10232"/>
        <dbReference type="Rhea" id="RHEA-COMP:10233"/>
        <dbReference type="ChEBI" id="CHEBI:15378"/>
        <dbReference type="ChEBI" id="CHEBI:57856"/>
        <dbReference type="ChEBI" id="CHEBI:59789"/>
        <dbReference type="ChEBI" id="CHEBI:74411"/>
        <dbReference type="ChEBI" id="CHEBI:74493"/>
        <dbReference type="EC" id="2.1.1.182"/>
    </reaction>
</comment>
<comment type="subcellular location">
    <subcellularLocation>
        <location evidence="1">Cytoplasm</location>
    </subcellularLocation>
</comment>
<comment type="similarity">
    <text evidence="1">Belongs to the class I-like SAM-binding methyltransferase superfamily. rRNA adenine N(6)-methyltransferase family. RsmA subfamily.</text>
</comment>
<keyword id="KW-0963">Cytoplasm</keyword>
<keyword id="KW-0489">Methyltransferase</keyword>
<keyword id="KW-0694">RNA-binding</keyword>
<keyword id="KW-0698">rRNA processing</keyword>
<keyword id="KW-0949">S-adenosyl-L-methionine</keyword>
<keyword id="KW-0808">Transferase</keyword>
<evidence type="ECO:0000255" key="1">
    <source>
        <dbReference type="HAMAP-Rule" id="MF_00607"/>
    </source>
</evidence>
<name>RSMA_STRZT</name>
<sequence length="290" mass="32237">MRIADYSVTKAVLERHGFTFKKSFGQNFLTDTNILQKIVDTAEIDDQVNVIEIGPGIGALTEFLAERAAQVMAFEIDHRLVPILADTLRDFDNVTVVNEDILKVDLAQHIQNFKNPDLPIKVVANLPYYITTPILMHLIESGIPFCEFVVMMQKEVADRISAQPNTKAYGSLSIAVQYYMTAKVAFIVPRTVFVPAPNVDSAILKMVRRPEPAVAVEDENFFFKVSKASFTHRRKTLWNNLTGYFGKTEEVKDKLTKALDQAGLSPSVRGEALSLAEFAGLADALKGQGL</sequence>
<organism>
    <name type="scientific">Streptococcus pneumoniae (strain Taiwan19F-14)</name>
    <dbReference type="NCBI Taxonomy" id="487213"/>
    <lineage>
        <taxon>Bacteria</taxon>
        <taxon>Bacillati</taxon>
        <taxon>Bacillota</taxon>
        <taxon>Bacilli</taxon>
        <taxon>Lactobacillales</taxon>
        <taxon>Streptococcaceae</taxon>
        <taxon>Streptococcus</taxon>
    </lineage>
</organism>
<gene>
    <name evidence="1" type="primary">rsmA</name>
    <name evidence="1" type="synonym">ksgA</name>
    <name type="ordered locus">SPT_1964</name>
</gene>
<dbReference type="EC" id="2.1.1.182" evidence="1"/>
<dbReference type="EMBL" id="CP000921">
    <property type="protein sequence ID" value="ACO23189.1"/>
    <property type="molecule type" value="Genomic_DNA"/>
</dbReference>
<dbReference type="RefSeq" id="WP_001216856.1">
    <property type="nucleotide sequence ID" value="NC_012469.1"/>
</dbReference>
<dbReference type="SMR" id="C1CTN9"/>
<dbReference type="KEGG" id="snt:SPT_1964"/>
<dbReference type="HOGENOM" id="CLU_041220_0_0_9"/>
<dbReference type="GO" id="GO:0005829">
    <property type="term" value="C:cytosol"/>
    <property type="evidence" value="ECO:0007669"/>
    <property type="project" value="TreeGrafter"/>
</dbReference>
<dbReference type="GO" id="GO:0052908">
    <property type="term" value="F:16S rRNA (adenine(1518)-N(6)/adenine(1519)-N(6))-dimethyltransferase activity"/>
    <property type="evidence" value="ECO:0007669"/>
    <property type="project" value="UniProtKB-EC"/>
</dbReference>
<dbReference type="GO" id="GO:0003723">
    <property type="term" value="F:RNA binding"/>
    <property type="evidence" value="ECO:0007669"/>
    <property type="project" value="UniProtKB-KW"/>
</dbReference>
<dbReference type="CDD" id="cd02440">
    <property type="entry name" value="AdoMet_MTases"/>
    <property type="match status" value="1"/>
</dbReference>
<dbReference type="FunFam" id="1.10.8.100:FF:000005">
    <property type="entry name" value="Ribosomal RNA small subunit methyltransferase A"/>
    <property type="match status" value="1"/>
</dbReference>
<dbReference type="FunFam" id="3.40.50.150:FF:000023">
    <property type="entry name" value="Ribosomal RNA small subunit methyltransferase A"/>
    <property type="match status" value="1"/>
</dbReference>
<dbReference type="Gene3D" id="1.10.8.100">
    <property type="entry name" value="Ribosomal RNA adenine dimethylase-like, domain 2"/>
    <property type="match status" value="1"/>
</dbReference>
<dbReference type="Gene3D" id="3.40.50.150">
    <property type="entry name" value="Vaccinia Virus protein VP39"/>
    <property type="match status" value="1"/>
</dbReference>
<dbReference type="HAMAP" id="MF_00607">
    <property type="entry name" value="16SrRNA_methyltr_A"/>
    <property type="match status" value="1"/>
</dbReference>
<dbReference type="InterPro" id="IPR001737">
    <property type="entry name" value="KsgA/Erm"/>
</dbReference>
<dbReference type="InterPro" id="IPR023165">
    <property type="entry name" value="rRNA_Ade_diMease-like_C"/>
</dbReference>
<dbReference type="InterPro" id="IPR020596">
    <property type="entry name" value="rRNA_Ade_Mease_Trfase_CS"/>
</dbReference>
<dbReference type="InterPro" id="IPR020598">
    <property type="entry name" value="rRNA_Ade_methylase_Trfase_N"/>
</dbReference>
<dbReference type="InterPro" id="IPR011530">
    <property type="entry name" value="rRNA_adenine_dimethylase"/>
</dbReference>
<dbReference type="InterPro" id="IPR029063">
    <property type="entry name" value="SAM-dependent_MTases_sf"/>
</dbReference>
<dbReference type="NCBIfam" id="TIGR00755">
    <property type="entry name" value="ksgA"/>
    <property type="match status" value="1"/>
</dbReference>
<dbReference type="PANTHER" id="PTHR11727">
    <property type="entry name" value="DIMETHYLADENOSINE TRANSFERASE"/>
    <property type="match status" value="1"/>
</dbReference>
<dbReference type="PANTHER" id="PTHR11727:SF7">
    <property type="entry name" value="DIMETHYLADENOSINE TRANSFERASE-RELATED"/>
    <property type="match status" value="1"/>
</dbReference>
<dbReference type="Pfam" id="PF00398">
    <property type="entry name" value="RrnaAD"/>
    <property type="match status" value="1"/>
</dbReference>
<dbReference type="SMART" id="SM00650">
    <property type="entry name" value="rADc"/>
    <property type="match status" value="1"/>
</dbReference>
<dbReference type="SUPFAM" id="SSF53335">
    <property type="entry name" value="S-adenosyl-L-methionine-dependent methyltransferases"/>
    <property type="match status" value="1"/>
</dbReference>
<dbReference type="PROSITE" id="PS01131">
    <property type="entry name" value="RRNA_A_DIMETH"/>
    <property type="match status" value="1"/>
</dbReference>
<dbReference type="PROSITE" id="PS51689">
    <property type="entry name" value="SAM_RNA_A_N6_MT"/>
    <property type="match status" value="1"/>
</dbReference>
<proteinExistence type="inferred from homology"/>
<accession>C1CTN9</accession>
<protein>
    <recommendedName>
        <fullName evidence="1">Ribosomal RNA small subunit methyltransferase A</fullName>
        <ecNumber evidence="1">2.1.1.182</ecNumber>
    </recommendedName>
    <alternativeName>
        <fullName evidence="1">16S rRNA (adenine(1518)-N(6)/adenine(1519)-N(6))-dimethyltransferase</fullName>
    </alternativeName>
    <alternativeName>
        <fullName evidence="1">16S rRNA dimethyladenosine transferase</fullName>
    </alternativeName>
    <alternativeName>
        <fullName evidence="1">16S rRNA dimethylase</fullName>
    </alternativeName>
    <alternativeName>
        <fullName evidence="1">S-adenosylmethionine-6-N', N'-adenosyl(rRNA) dimethyltransferase</fullName>
    </alternativeName>
</protein>
<feature type="chain" id="PRO_1000147156" description="Ribosomal RNA small subunit methyltransferase A">
    <location>
        <begin position="1"/>
        <end position="290"/>
    </location>
</feature>
<feature type="binding site" evidence="1">
    <location>
        <position position="27"/>
    </location>
    <ligand>
        <name>S-adenosyl-L-methionine</name>
        <dbReference type="ChEBI" id="CHEBI:59789"/>
    </ligand>
</feature>
<feature type="binding site" evidence="1">
    <location>
        <position position="29"/>
    </location>
    <ligand>
        <name>S-adenosyl-L-methionine</name>
        <dbReference type="ChEBI" id="CHEBI:59789"/>
    </ligand>
</feature>
<feature type="binding site" evidence="1">
    <location>
        <position position="54"/>
    </location>
    <ligand>
        <name>S-adenosyl-L-methionine</name>
        <dbReference type="ChEBI" id="CHEBI:59789"/>
    </ligand>
</feature>
<feature type="binding site" evidence="1">
    <location>
        <position position="75"/>
    </location>
    <ligand>
        <name>S-adenosyl-L-methionine</name>
        <dbReference type="ChEBI" id="CHEBI:59789"/>
    </ligand>
</feature>
<feature type="binding site" evidence="1">
    <location>
        <position position="100"/>
    </location>
    <ligand>
        <name>S-adenosyl-L-methionine</name>
        <dbReference type="ChEBI" id="CHEBI:59789"/>
    </ligand>
</feature>
<feature type="binding site" evidence="1">
    <location>
        <position position="125"/>
    </location>
    <ligand>
        <name>S-adenosyl-L-methionine</name>
        <dbReference type="ChEBI" id="CHEBI:59789"/>
    </ligand>
</feature>
<reference key="1">
    <citation type="journal article" date="2010" name="Genome Biol.">
        <title>Structure and dynamics of the pan-genome of Streptococcus pneumoniae and closely related species.</title>
        <authorList>
            <person name="Donati C."/>
            <person name="Hiller N.L."/>
            <person name="Tettelin H."/>
            <person name="Muzzi A."/>
            <person name="Croucher N.J."/>
            <person name="Angiuoli S.V."/>
            <person name="Oggioni M."/>
            <person name="Dunning Hotopp J.C."/>
            <person name="Hu F.Z."/>
            <person name="Riley D.R."/>
            <person name="Covacci A."/>
            <person name="Mitchell T.J."/>
            <person name="Bentley S.D."/>
            <person name="Kilian M."/>
            <person name="Ehrlich G.D."/>
            <person name="Rappuoli R."/>
            <person name="Moxon E.R."/>
            <person name="Masignani V."/>
        </authorList>
    </citation>
    <scope>NUCLEOTIDE SEQUENCE [LARGE SCALE GENOMIC DNA]</scope>
    <source>
        <strain>Taiwan19F-14</strain>
    </source>
</reference>